<keyword id="KW-0687">Ribonucleoprotein</keyword>
<keyword id="KW-0689">Ribosomal protein</keyword>
<dbReference type="EMBL" id="CP000976">
    <property type="protein sequence ID" value="ACH93144.1"/>
    <property type="molecule type" value="Genomic_DNA"/>
</dbReference>
<dbReference type="RefSeq" id="WP_012537956.1">
    <property type="nucleotide sequence ID" value="NC_011229.1"/>
</dbReference>
<dbReference type="SMR" id="B5RL15"/>
<dbReference type="STRING" id="412419.BDU_188"/>
<dbReference type="KEGG" id="bdu:BDU_188"/>
<dbReference type="eggNOG" id="COG0291">
    <property type="taxonomic scope" value="Bacteria"/>
</dbReference>
<dbReference type="HOGENOM" id="CLU_169643_1_1_12"/>
<dbReference type="OrthoDB" id="47476at2"/>
<dbReference type="Proteomes" id="UP000000611">
    <property type="component" value="Chromosome"/>
</dbReference>
<dbReference type="GO" id="GO:0022625">
    <property type="term" value="C:cytosolic large ribosomal subunit"/>
    <property type="evidence" value="ECO:0007669"/>
    <property type="project" value="TreeGrafter"/>
</dbReference>
<dbReference type="GO" id="GO:0003735">
    <property type="term" value="F:structural constituent of ribosome"/>
    <property type="evidence" value="ECO:0007669"/>
    <property type="project" value="InterPro"/>
</dbReference>
<dbReference type="GO" id="GO:0006412">
    <property type="term" value="P:translation"/>
    <property type="evidence" value="ECO:0007669"/>
    <property type="project" value="UniProtKB-UniRule"/>
</dbReference>
<dbReference type="FunFam" id="4.10.410.60:FF:000001">
    <property type="entry name" value="50S ribosomal protein L35"/>
    <property type="match status" value="1"/>
</dbReference>
<dbReference type="Gene3D" id="4.10.410.60">
    <property type="match status" value="1"/>
</dbReference>
<dbReference type="HAMAP" id="MF_00514">
    <property type="entry name" value="Ribosomal_bL35"/>
    <property type="match status" value="1"/>
</dbReference>
<dbReference type="InterPro" id="IPR001706">
    <property type="entry name" value="Ribosomal_bL35"/>
</dbReference>
<dbReference type="InterPro" id="IPR021137">
    <property type="entry name" value="Ribosomal_bL35-like"/>
</dbReference>
<dbReference type="InterPro" id="IPR018265">
    <property type="entry name" value="Ribosomal_bL35_CS"/>
</dbReference>
<dbReference type="InterPro" id="IPR037229">
    <property type="entry name" value="Ribosomal_bL35_sf"/>
</dbReference>
<dbReference type="NCBIfam" id="TIGR00001">
    <property type="entry name" value="rpmI_bact"/>
    <property type="match status" value="1"/>
</dbReference>
<dbReference type="PANTHER" id="PTHR33343">
    <property type="entry name" value="54S RIBOSOMAL PROTEIN BL35M"/>
    <property type="match status" value="1"/>
</dbReference>
<dbReference type="PANTHER" id="PTHR33343:SF1">
    <property type="entry name" value="LARGE RIBOSOMAL SUBUNIT PROTEIN BL35M"/>
    <property type="match status" value="1"/>
</dbReference>
<dbReference type="Pfam" id="PF01632">
    <property type="entry name" value="Ribosomal_L35p"/>
    <property type="match status" value="1"/>
</dbReference>
<dbReference type="PRINTS" id="PR00064">
    <property type="entry name" value="RIBOSOMALL35"/>
</dbReference>
<dbReference type="SUPFAM" id="SSF143034">
    <property type="entry name" value="L35p-like"/>
    <property type="match status" value="1"/>
</dbReference>
<dbReference type="PROSITE" id="PS00936">
    <property type="entry name" value="RIBOSOMAL_L35"/>
    <property type="match status" value="1"/>
</dbReference>
<reference key="1">
    <citation type="journal article" date="2008" name="PLoS Genet.">
        <title>The genome of Borrelia recurrentis, the agent of deadly louse-borne relapsing fever, is a degraded subset of tick-borne Borrelia duttonii.</title>
        <authorList>
            <person name="Lescot M."/>
            <person name="Audic S."/>
            <person name="Robert C."/>
            <person name="Nguyen T.T."/>
            <person name="Blanc G."/>
            <person name="Cutler S.J."/>
            <person name="Wincker P."/>
            <person name="Couloux A."/>
            <person name="Claverie J.-M."/>
            <person name="Raoult D."/>
            <person name="Drancourt M."/>
        </authorList>
    </citation>
    <scope>NUCLEOTIDE SEQUENCE [LARGE SCALE GENOMIC DNA]</scope>
    <source>
        <strain>Ly</strain>
    </source>
</reference>
<name>RL35_BORDL</name>
<sequence length="65" mass="7564">MPKMKTCKSARKRYAFTSKGKVKYKKQNLRHILTKKSAKRKRNLGKSGLVSNVEVKRIKTLLPYV</sequence>
<protein>
    <recommendedName>
        <fullName evidence="1">Large ribosomal subunit protein bL35</fullName>
    </recommendedName>
    <alternativeName>
        <fullName evidence="2">50S ribosomal protein L35</fullName>
    </alternativeName>
</protein>
<accession>B5RL15</accession>
<organism>
    <name type="scientific">Borrelia duttonii (strain Ly)</name>
    <dbReference type="NCBI Taxonomy" id="412419"/>
    <lineage>
        <taxon>Bacteria</taxon>
        <taxon>Pseudomonadati</taxon>
        <taxon>Spirochaetota</taxon>
        <taxon>Spirochaetia</taxon>
        <taxon>Spirochaetales</taxon>
        <taxon>Borreliaceae</taxon>
        <taxon>Borrelia</taxon>
    </lineage>
</organism>
<proteinExistence type="inferred from homology"/>
<evidence type="ECO:0000255" key="1">
    <source>
        <dbReference type="HAMAP-Rule" id="MF_00514"/>
    </source>
</evidence>
<evidence type="ECO:0000305" key="2"/>
<comment type="similarity">
    <text evidence="1">Belongs to the bacterial ribosomal protein bL35 family.</text>
</comment>
<feature type="chain" id="PRO_1000127312" description="Large ribosomal subunit protein bL35">
    <location>
        <begin position="1"/>
        <end position="65"/>
    </location>
</feature>
<gene>
    <name evidence="1" type="primary">rpmI</name>
    <name type="ordered locus">BDU_188</name>
</gene>